<accession>P52575</accession>
<feature type="chain" id="PRO_0000204546" description="Isoflavone reductase">
    <location>
        <begin position="1"/>
        <end position="318"/>
    </location>
</feature>
<feature type="active site" description="Proton acceptor" evidence="7">
    <location>
        <position position="144"/>
    </location>
</feature>
<feature type="binding site" evidence="7">
    <location>
        <begin position="11"/>
        <end position="17"/>
    </location>
    <ligand>
        <name>NADP(+)</name>
        <dbReference type="ChEBI" id="CHEBI:58349"/>
    </ligand>
</feature>
<feature type="binding site" evidence="1">
    <location>
        <position position="36"/>
    </location>
    <ligand>
        <name>NADP(+)</name>
        <dbReference type="ChEBI" id="CHEBI:58349"/>
    </ligand>
</feature>
<feature type="binding site" evidence="1">
    <location>
        <position position="44"/>
    </location>
    <ligand>
        <name>NADP(+)</name>
        <dbReference type="ChEBI" id="CHEBI:58349"/>
    </ligand>
</feature>
<feature type="binding site" evidence="1">
    <location>
        <position position="148"/>
    </location>
    <ligand>
        <name>NADP(+)</name>
        <dbReference type="ChEBI" id="CHEBI:58349"/>
    </ligand>
</feature>
<feature type="mutagenesis site" description="Loss of enzyme activity." evidence="2">
    <original>G</original>
    <variation>F</variation>
    <location>
        <position position="14"/>
    </location>
</feature>
<feature type="mutagenesis site" description="Loss of enzyme activity." evidence="2">
    <original>K</original>
    <variation>A</variation>
    <location>
        <position position="144"/>
    </location>
</feature>
<feature type="sequence conflict" description="In Ref. 1; CAA41106." evidence="6" ref="1">
    <original>E</original>
    <variation>D</variation>
    <location>
        <position position="132"/>
    </location>
</feature>
<feature type="sequence conflict" description="In Ref. 1; CAA41106." evidence="6" ref="1">
    <original>T</original>
    <variation>A</variation>
    <location>
        <position position="179"/>
    </location>
</feature>
<feature type="sequence conflict" description="In Ref. 1; CAA41106." evidence="6" ref="1">
    <original>E</original>
    <variation>K</variation>
    <location>
        <position position="229"/>
    </location>
</feature>
<feature type="strand" evidence="9">
    <location>
        <begin position="7"/>
        <end position="11"/>
    </location>
</feature>
<feature type="helix" evidence="9">
    <location>
        <begin position="17"/>
        <end position="27"/>
    </location>
</feature>
<feature type="strand" evidence="9">
    <location>
        <begin position="31"/>
        <end position="35"/>
    </location>
</feature>
<feature type="helix" evidence="9">
    <location>
        <begin position="53"/>
        <end position="65"/>
    </location>
</feature>
<feature type="strand" evidence="9">
    <location>
        <begin position="69"/>
        <end position="72"/>
    </location>
</feature>
<feature type="helix" evidence="9">
    <location>
        <begin position="78"/>
        <end position="85"/>
    </location>
</feature>
<feature type="strand" evidence="9">
    <location>
        <begin position="89"/>
        <end position="93"/>
    </location>
</feature>
<feature type="strand" evidence="9">
    <location>
        <begin position="95"/>
        <end position="98"/>
    </location>
</feature>
<feature type="helix" evidence="9">
    <location>
        <begin position="100"/>
        <end position="102"/>
    </location>
</feature>
<feature type="helix" evidence="9">
    <location>
        <begin position="103"/>
        <end position="113"/>
    </location>
</feature>
<feature type="strand" evidence="9">
    <location>
        <begin position="117"/>
        <end position="120"/>
    </location>
</feature>
<feature type="helix" evidence="9">
    <location>
        <begin position="137"/>
        <end position="154"/>
    </location>
</feature>
<feature type="strand" evidence="9">
    <location>
        <begin position="158"/>
        <end position="162"/>
    </location>
</feature>
<feature type="turn" evidence="9">
    <location>
        <begin position="167"/>
        <end position="170"/>
    </location>
</feature>
<feature type="helix" evidence="9">
    <location>
        <begin position="171"/>
        <end position="173"/>
    </location>
</feature>
<feature type="strand" evidence="9">
    <location>
        <begin position="184"/>
        <end position="190"/>
    </location>
</feature>
<feature type="strand" evidence="9">
    <location>
        <begin position="195"/>
        <end position="200"/>
    </location>
</feature>
<feature type="helix" evidence="9">
    <location>
        <begin position="202"/>
        <end position="213"/>
    </location>
</feature>
<feature type="helix" evidence="9">
    <location>
        <begin position="216"/>
        <end position="218"/>
    </location>
</feature>
<feature type="strand" evidence="9">
    <location>
        <begin position="221"/>
        <end position="224"/>
    </location>
</feature>
<feature type="helix" evidence="9">
    <location>
        <begin position="228"/>
        <end position="230"/>
    </location>
</feature>
<feature type="strand" evidence="9">
    <location>
        <begin position="231"/>
        <end position="233"/>
    </location>
</feature>
<feature type="helix" evidence="9">
    <location>
        <begin position="234"/>
        <end position="245"/>
    </location>
</feature>
<feature type="strand" evidence="9">
    <location>
        <begin position="250"/>
        <end position="254"/>
    </location>
</feature>
<feature type="helix" evidence="9">
    <location>
        <begin position="256"/>
        <end position="265"/>
    </location>
</feature>
<feature type="helix" evidence="9">
    <location>
        <begin position="270"/>
        <end position="281"/>
    </location>
</feature>
<feature type="turn" evidence="9">
    <location>
        <begin position="292"/>
        <end position="294"/>
    </location>
</feature>
<feature type="strand" evidence="9">
    <location>
        <begin position="295"/>
        <end position="297"/>
    </location>
</feature>
<feature type="helix" evidence="9">
    <location>
        <begin position="298"/>
        <end position="301"/>
    </location>
</feature>
<feature type="helix" evidence="9">
    <location>
        <begin position="310"/>
        <end position="314"/>
    </location>
</feature>
<feature type="helix" evidence="9">
    <location>
        <begin position="315"/>
        <end position="317"/>
    </location>
</feature>
<sequence length="318" mass="35455">MATENKILILGPTGAIGRHIVWASIKAGNPTYALVRKTPGNVNKPKLITAANPETKEELIDNYQSLGVILLEGDINDHETLVKAIKQVDIVICAAGRLLIEDQVKIIKAIKEAGNVKKFFPSEFGLDVDRHEAVEPVRQVFEEKASIRRVIEAEGVPYTYLCCHAFTGYFLRNLAQLDTTDPPRDKVVILGDGNVKGAYVTEADVGTFTIRAANDPNTLNKAVHIRLPENYLTQNEVIALWEKKIGKTLEKTYVSEEQVLKDIQESSFPHNYLLALYHSQQIKGDAVYEIDPAKDIEASEAYPDVTYTTADEYLNQFV</sequence>
<proteinExistence type="evidence at protein level"/>
<dbReference type="EC" id="1.3.1.45" evidence="2"/>
<dbReference type="EMBL" id="X58078">
    <property type="protein sequence ID" value="CAA41106.1"/>
    <property type="molecule type" value="mRNA"/>
</dbReference>
<dbReference type="EMBL" id="U17436">
    <property type="protein sequence ID" value="AAC48976.1"/>
    <property type="molecule type" value="Genomic_DNA"/>
</dbReference>
<dbReference type="PIR" id="S17744">
    <property type="entry name" value="S17744"/>
</dbReference>
<dbReference type="PDB" id="2GAS">
    <property type="method" value="X-ray"/>
    <property type="resolution" value="1.60 A"/>
    <property type="chains" value="A/B=3-318"/>
</dbReference>
<dbReference type="PDBsum" id="2GAS"/>
<dbReference type="SMR" id="P52575"/>
<dbReference type="BioCyc" id="MetaCyc:MONOMER-5681"/>
<dbReference type="UniPathway" id="UPA00901"/>
<dbReference type="EvolutionaryTrace" id="P52575"/>
<dbReference type="GO" id="GO:0047526">
    <property type="term" value="F:2'-hydroxyisoflavone reductase activity"/>
    <property type="evidence" value="ECO:0007669"/>
    <property type="project" value="UniProtKB-EC"/>
</dbReference>
<dbReference type="GO" id="GO:0006952">
    <property type="term" value="P:defense response"/>
    <property type="evidence" value="ECO:0007669"/>
    <property type="project" value="UniProtKB-KW"/>
</dbReference>
<dbReference type="GO" id="GO:0009807">
    <property type="term" value="P:lignan biosynthetic process"/>
    <property type="evidence" value="ECO:0007669"/>
    <property type="project" value="UniProtKB-ARBA"/>
</dbReference>
<dbReference type="CDD" id="cd05259">
    <property type="entry name" value="PCBER_SDR_a"/>
    <property type="match status" value="1"/>
</dbReference>
<dbReference type="Gene3D" id="3.40.50.720">
    <property type="entry name" value="NAD(P)-binding Rossmann-like Domain"/>
    <property type="match status" value="1"/>
</dbReference>
<dbReference type="Gene3D" id="3.90.25.10">
    <property type="entry name" value="UDP-galactose 4-epimerase, domain 1"/>
    <property type="match status" value="1"/>
</dbReference>
<dbReference type="InterPro" id="IPR036291">
    <property type="entry name" value="NAD(P)-bd_dom_sf"/>
</dbReference>
<dbReference type="InterPro" id="IPR008030">
    <property type="entry name" value="NmrA-like"/>
</dbReference>
<dbReference type="InterPro" id="IPR050608">
    <property type="entry name" value="NmrA-type/Isoflavone_red_sf"/>
</dbReference>
<dbReference type="InterPro" id="IPR045312">
    <property type="entry name" value="PCBER-like"/>
</dbReference>
<dbReference type="PANTHER" id="PTHR43349:SF53">
    <property type="entry name" value="ISOFLAVONE REDUCTASE"/>
    <property type="match status" value="1"/>
</dbReference>
<dbReference type="PANTHER" id="PTHR43349">
    <property type="entry name" value="PINORESINOL REDUCTASE-RELATED"/>
    <property type="match status" value="1"/>
</dbReference>
<dbReference type="Pfam" id="PF05368">
    <property type="entry name" value="NmrA"/>
    <property type="match status" value="1"/>
</dbReference>
<dbReference type="SUPFAM" id="SSF51735">
    <property type="entry name" value="NAD(P)-binding Rossmann-fold domains"/>
    <property type="match status" value="1"/>
</dbReference>
<organism>
    <name type="scientific">Medicago sativa</name>
    <name type="common">Alfalfa</name>
    <dbReference type="NCBI Taxonomy" id="3879"/>
    <lineage>
        <taxon>Eukaryota</taxon>
        <taxon>Viridiplantae</taxon>
        <taxon>Streptophyta</taxon>
        <taxon>Embryophyta</taxon>
        <taxon>Tracheophyta</taxon>
        <taxon>Spermatophyta</taxon>
        <taxon>Magnoliopsida</taxon>
        <taxon>eudicotyledons</taxon>
        <taxon>Gunneridae</taxon>
        <taxon>Pentapetalae</taxon>
        <taxon>rosids</taxon>
        <taxon>fabids</taxon>
        <taxon>Fabales</taxon>
        <taxon>Fabaceae</taxon>
        <taxon>Papilionoideae</taxon>
        <taxon>50 kb inversion clade</taxon>
        <taxon>NPAAA clade</taxon>
        <taxon>Hologalegina</taxon>
        <taxon>IRL clade</taxon>
        <taxon>Trifolieae</taxon>
        <taxon>Medicago</taxon>
    </lineage>
</organism>
<name>IFR_MEDSA</name>
<gene>
    <name evidence="5" type="primary">IFR</name>
</gene>
<evidence type="ECO:0000250" key="1">
    <source>
        <dbReference type="UniProtKB" id="Q9LD14"/>
    </source>
</evidence>
<evidence type="ECO:0000269" key="2">
    <source>
    </source>
</evidence>
<evidence type="ECO:0000269" key="3">
    <source>
    </source>
</evidence>
<evidence type="ECO:0000269" key="4">
    <source>
    </source>
</evidence>
<evidence type="ECO:0000303" key="5">
    <source>
    </source>
</evidence>
<evidence type="ECO:0000305" key="6"/>
<evidence type="ECO:0000305" key="7">
    <source>
    </source>
</evidence>
<evidence type="ECO:0000305" key="8">
    <source>
    </source>
</evidence>
<evidence type="ECO:0007829" key="9">
    <source>
        <dbReference type="PDB" id="2GAS"/>
    </source>
</evidence>
<keyword id="KW-0002">3D-structure</keyword>
<keyword id="KW-0521">NADP</keyword>
<keyword id="KW-0560">Oxidoreductase</keyword>
<keyword id="KW-0611">Plant defense</keyword>
<protein>
    <recommendedName>
        <fullName evidence="5">Isoflavone reductase</fullName>
        <shortName evidence="5">IFR</shortName>
        <ecNumber evidence="2">1.3.1.45</ecNumber>
    </recommendedName>
    <alternativeName>
        <fullName evidence="6">2'-hydroxyisoflavone reductase</fullName>
    </alternativeName>
    <alternativeName>
        <fullName evidence="6">NADPH:isoflavone oxidoreductase</fullName>
    </alternativeName>
</protein>
<comment type="function">
    <text evidence="8">Reduces achiral isoflavones to chiral isoflavanones during the biosynthesis of chiral pterocarpan phytoalexins. The reduction product is a third isomer, which represents the penultimate intermediate in the synthesis of the phytoalexin (-)-medicarpin, the major phytoalexin in Alfalfa.</text>
</comment>
<comment type="catalytic activity">
    <reaction evidence="2">
        <text>(3R)-vestitone + NADP(+) = 2'-hydroxyformononetin + NADPH + 2 H(+)</text>
        <dbReference type="Rhea" id="RHEA:22560"/>
        <dbReference type="ChEBI" id="CHEBI:15378"/>
        <dbReference type="ChEBI" id="CHEBI:16786"/>
        <dbReference type="ChEBI" id="CHEBI:57783"/>
        <dbReference type="ChEBI" id="CHEBI:58349"/>
        <dbReference type="ChEBI" id="CHEBI:77687"/>
        <dbReference type="EC" id="1.3.1.45"/>
    </reaction>
</comment>
<comment type="biophysicochemical properties">
    <kinetics>
        <KM evidence="2">14.2 uM for 2'-hydroxyformononetin</KM>
    </kinetics>
</comment>
<comment type="pathway">
    <text evidence="6">Phytoalexin biosynthesis; pterocarpan phytoalexin biosynthesis.</text>
</comment>
<comment type="induction">
    <text evidence="3 4">By fungal elicitor (PubMed:7866024). Induced by the bacterial pathogens Pseudomonas syringae pv pisi and Xanthomonas campestris pv alfalfae (PubMed:8274775).</text>
</comment>
<comment type="similarity">
    <text evidence="6">Belongs to the NmrA-type oxidoreductase family. Isoflavone reductase subfamily.</text>
</comment>
<reference key="1">
    <citation type="journal article" date="1991" name="Plant Mol. Biol.">
        <title>Stress responses in alfalfa (Medicago sativa L.) 11. Molecular cloning and expression of alfalfa isoflavone reductase, a key enzyme of isoflavonoid phytoalexin biosynthesis.</title>
        <authorList>
            <person name="Paiva N.L."/>
            <person name="Edwards R."/>
            <person name="Sun Y."/>
            <person name="Hrazdina G."/>
            <person name="Dixon R.A."/>
        </authorList>
    </citation>
    <scope>NUCLEOTIDE SEQUENCE [MRNA]</scope>
    <scope>FUNCTION</scope>
    <source>
        <strain>cv. Apollo</strain>
    </source>
</reference>
<reference key="2">
    <citation type="journal article" date="1994" name="Plant Cell">
        <title>The elicitor-inducible alfalfa isoflavone reductase promoter confers different patterns of developmental expression in homologous and heterologous transgenic plants.</title>
        <authorList>
            <person name="Oommen A."/>
            <person name="Dixon R.A."/>
            <person name="Paiva N.L."/>
        </authorList>
    </citation>
    <scope>NUCLEOTIDE SEQUENCE [GENOMIC DNA]</scope>
    <scope>INDUCTION</scope>
</reference>
<reference key="3">
    <citation type="journal article" date="1993" name="Mol. Plant Microbe Interact.">
        <title>Pathological and molecular characterizations of alfalfa interactions with compatible and incompatible bacteria, Xanthomonas campestris pv. alfalfae and Pseudomonas syringae pv. pisi.</title>
        <authorList>
            <person name="Esnault R."/>
            <person name="Buffard D."/>
            <person name="Breda C."/>
            <person name="Sallaud C."/>
            <person name="El-Turk J."/>
            <person name="Kondorosi A."/>
        </authorList>
    </citation>
    <scope>INDUCTION</scope>
</reference>
<reference key="4">
    <citation type="journal article" date="2006" name="J. Mol. Biol.">
        <title>Crystal structure of isoflavone reductase from alfalfa (Medicago sativa L.).</title>
        <authorList>
            <person name="Wang X."/>
            <person name="He X."/>
            <person name="Lin J."/>
            <person name="Shao H."/>
            <person name="Chang Z."/>
            <person name="Dixon R.A."/>
        </authorList>
    </citation>
    <scope>X-RAY CRYSTALLOGRAPHY (1.60 ANGSTROMS) OF 3-318</scope>
    <scope>CATALYTIC ACTIVITY</scope>
    <scope>BIOPHYSICOCHEMICAL PROPERTIES</scope>
    <scope>ACTIVE SITE</scope>
    <scope>BINDING SITES</scope>
    <scope>SUBUNIT</scope>
    <scope>MUTAGENESIS OF GLY-14 AND LYS-144</scope>
</reference>